<dbReference type="EC" id="3.5.4.37"/>
<dbReference type="EMBL" id="AF291875">
    <property type="protein sequence ID" value="AAK16101.1"/>
    <property type="molecule type" value="mRNA"/>
</dbReference>
<dbReference type="EMBL" id="AF291876">
    <property type="protein sequence ID" value="AAK16102.1"/>
    <property type="molecule type" value="mRNA"/>
</dbReference>
<dbReference type="EMBL" id="AF291877">
    <property type="protein sequence ID" value="AAK16103.1"/>
    <property type="molecule type" value="mRNA"/>
</dbReference>
<dbReference type="EMBL" id="AF291050">
    <property type="protein sequence ID" value="AAK17103.1"/>
    <property type="molecule type" value="mRNA"/>
</dbReference>
<dbReference type="EMBL" id="AF052506">
    <property type="protein sequence ID" value="AAC06233.1"/>
    <property type="molecule type" value="mRNA"/>
</dbReference>
<dbReference type="EMBL" id="BC042505">
    <property type="protein sequence ID" value="AAH42505.1"/>
    <property type="molecule type" value="mRNA"/>
</dbReference>
<dbReference type="EMBL" id="AK089451">
    <property type="protein sequence ID" value="BAC40888.2"/>
    <property type="molecule type" value="mRNA"/>
</dbReference>
<dbReference type="CCDS" id="CCDS17513.1">
    <molecule id="Q99MU3-2"/>
</dbReference>
<dbReference type="CCDS" id="CCDS17514.1">
    <molecule id="Q99MU3-5"/>
</dbReference>
<dbReference type="CCDS" id="CCDS50963.1">
    <molecule id="Q99MU3-1"/>
</dbReference>
<dbReference type="RefSeq" id="NP_001033676.2">
    <molecule id="Q99MU3-5"/>
    <property type="nucleotide sequence ID" value="NM_001038587.5"/>
</dbReference>
<dbReference type="RefSeq" id="NP_001139768.1">
    <molecule id="Q99MU3-1"/>
    <property type="nucleotide sequence ID" value="NM_001146296.2"/>
</dbReference>
<dbReference type="RefSeq" id="NP_001397588.1">
    <molecule id="Q99MU3-5"/>
    <property type="nucleotide sequence ID" value="NM_001410659.1"/>
</dbReference>
<dbReference type="RefSeq" id="NP_001397591.1">
    <molecule id="Q99MU3-4"/>
    <property type="nucleotide sequence ID" value="NM_001410662.1"/>
</dbReference>
<dbReference type="RefSeq" id="NP_001397592.1">
    <molecule id="Q99MU3-3"/>
    <property type="nucleotide sequence ID" value="NM_001410663.1"/>
</dbReference>
<dbReference type="RefSeq" id="NP_001397593.1">
    <molecule id="Q99MU3-3"/>
    <property type="nucleotide sequence ID" value="NM_001410664.1"/>
</dbReference>
<dbReference type="RefSeq" id="NP_062629.3">
    <molecule id="Q99MU3-2"/>
    <property type="nucleotide sequence ID" value="NM_019655.3"/>
</dbReference>
<dbReference type="RefSeq" id="XP_006501817.1">
    <property type="nucleotide sequence ID" value="XM_006501754.2"/>
</dbReference>
<dbReference type="SMR" id="Q99MU3"/>
<dbReference type="BioGRID" id="207963">
    <property type="interactions" value="16"/>
</dbReference>
<dbReference type="FunCoup" id="Q99MU3">
    <property type="interactions" value="4035"/>
</dbReference>
<dbReference type="STRING" id="10090.ENSMUSP00000103028"/>
<dbReference type="GlyGen" id="Q99MU3">
    <property type="glycosylation" value="3 sites, 1 N-linked glycan (1 site), 1 O-linked glycan (1 site)"/>
</dbReference>
<dbReference type="iPTMnet" id="Q99MU3"/>
<dbReference type="PhosphoSitePlus" id="Q99MU3"/>
<dbReference type="SwissPalm" id="Q99MU3"/>
<dbReference type="PaxDb" id="10090-ENSMUSP00000103028"/>
<dbReference type="PeptideAtlas" id="Q99MU3"/>
<dbReference type="ProteomicsDB" id="277508">
    <molecule id="Q99MU3-1"/>
</dbReference>
<dbReference type="ProteomicsDB" id="277509">
    <molecule id="Q99MU3-2"/>
</dbReference>
<dbReference type="ProteomicsDB" id="277510">
    <molecule id="Q99MU3-3"/>
</dbReference>
<dbReference type="ProteomicsDB" id="277511">
    <molecule id="Q99MU3-4"/>
</dbReference>
<dbReference type="ProteomicsDB" id="277512">
    <molecule id="Q99MU3-5"/>
</dbReference>
<dbReference type="Pumba" id="Q99MU3"/>
<dbReference type="Antibodypedia" id="1280">
    <property type="antibodies" value="280 antibodies from 33 providers"/>
</dbReference>
<dbReference type="DNASU" id="56417"/>
<dbReference type="Ensembl" id="ENSMUST00000029563.14">
    <molecule id="Q99MU3-2"/>
    <property type="protein sequence ID" value="ENSMUSP00000029563.9"/>
    <property type="gene ID" value="ENSMUSG00000027951.17"/>
</dbReference>
<dbReference type="Ensembl" id="ENSMUST00000098924.9">
    <molecule id="Q99MU3-5"/>
    <property type="protein sequence ID" value="ENSMUSP00000096525.3"/>
    <property type="gene ID" value="ENSMUSG00000027951.17"/>
</dbReference>
<dbReference type="Ensembl" id="ENSMUST00000107405.6">
    <molecule id="Q99MU3-1"/>
    <property type="protein sequence ID" value="ENSMUSP00000103028.3"/>
    <property type="gene ID" value="ENSMUSG00000027951.17"/>
</dbReference>
<dbReference type="Ensembl" id="ENSMUST00000118341.6">
    <molecule id="Q99MU3-4"/>
    <property type="protein sequence ID" value="ENSMUSP00000113453.2"/>
    <property type="gene ID" value="ENSMUSG00000027951.17"/>
</dbReference>
<dbReference type="Ensembl" id="ENSMUST00000121094.8">
    <molecule id="Q99MU3-3"/>
    <property type="protein sequence ID" value="ENSMUSP00000112969.2"/>
    <property type="gene ID" value="ENSMUSG00000027951.17"/>
</dbReference>
<dbReference type="GeneID" id="56417"/>
<dbReference type="KEGG" id="mmu:56417"/>
<dbReference type="UCSC" id="uc008pzv.2">
    <molecule id="Q99MU3-1"/>
    <property type="organism name" value="mouse"/>
</dbReference>
<dbReference type="UCSC" id="uc008pzw.2">
    <molecule id="Q99MU3-2"/>
    <property type="organism name" value="mouse"/>
</dbReference>
<dbReference type="UCSC" id="uc008pzy.2">
    <molecule id="Q99MU3-3"/>
    <property type="organism name" value="mouse"/>
</dbReference>
<dbReference type="AGR" id="MGI:1889575"/>
<dbReference type="CTD" id="103"/>
<dbReference type="MGI" id="MGI:1889575">
    <property type="gene designation" value="Adar"/>
</dbReference>
<dbReference type="VEuPathDB" id="HostDB:ENSMUSG00000027951"/>
<dbReference type="eggNOG" id="KOG2777">
    <property type="taxonomic scope" value="Eukaryota"/>
</dbReference>
<dbReference type="GeneTree" id="ENSGT00940000157243"/>
<dbReference type="HOGENOM" id="CLU_005382_0_0_1"/>
<dbReference type="InParanoid" id="Q99MU3"/>
<dbReference type="OMA" id="ERMQMKR"/>
<dbReference type="PhylomeDB" id="Q99MU3"/>
<dbReference type="TreeFam" id="TF315806"/>
<dbReference type="BRENDA" id="3.5.4.37">
    <property type="organism ID" value="3474"/>
</dbReference>
<dbReference type="Reactome" id="R-MMU-75102">
    <property type="pathway name" value="C6 deamination of adenosine"/>
</dbReference>
<dbReference type="Reactome" id="R-MMU-77042">
    <property type="pathway name" value="Formation of editosomes by ADAR proteins"/>
</dbReference>
<dbReference type="Reactome" id="R-MMU-9833482">
    <property type="pathway name" value="PKR-mediated signaling"/>
</dbReference>
<dbReference type="BioGRID-ORCS" id="56417">
    <property type="hits" value="20 hits in 83 CRISPR screens"/>
</dbReference>
<dbReference type="ChiTaRS" id="Adar">
    <property type="organism name" value="mouse"/>
</dbReference>
<dbReference type="PRO" id="PR:Q99MU3"/>
<dbReference type="Proteomes" id="UP000000589">
    <property type="component" value="Chromosome 3"/>
</dbReference>
<dbReference type="RNAct" id="Q99MU3">
    <property type="molecule type" value="protein"/>
</dbReference>
<dbReference type="Bgee" id="ENSMUSG00000027951">
    <property type="expression patterns" value="Expressed in dorsal tegmental nucleus and 256 other cell types or tissues"/>
</dbReference>
<dbReference type="GO" id="GO:0005737">
    <property type="term" value="C:cytoplasm"/>
    <property type="evidence" value="ECO:0000314"/>
    <property type="project" value="MGI"/>
</dbReference>
<dbReference type="GO" id="GO:0005730">
    <property type="term" value="C:nucleolus"/>
    <property type="evidence" value="ECO:0000314"/>
    <property type="project" value="MGI"/>
</dbReference>
<dbReference type="GO" id="GO:0005654">
    <property type="term" value="C:nucleoplasm"/>
    <property type="evidence" value="ECO:0007669"/>
    <property type="project" value="Ensembl"/>
</dbReference>
<dbReference type="GO" id="GO:0005634">
    <property type="term" value="C:nucleus"/>
    <property type="evidence" value="ECO:0000314"/>
    <property type="project" value="MGI"/>
</dbReference>
<dbReference type="GO" id="GO:0044530">
    <property type="term" value="C:supraspliceosomal complex"/>
    <property type="evidence" value="ECO:0000250"/>
    <property type="project" value="UniProtKB"/>
</dbReference>
<dbReference type="GO" id="GO:0004000">
    <property type="term" value="F:adenosine deaminase activity"/>
    <property type="evidence" value="ECO:0007669"/>
    <property type="project" value="InterPro"/>
</dbReference>
<dbReference type="GO" id="GO:0003726">
    <property type="term" value="F:double-stranded RNA adenosine deaminase activity"/>
    <property type="evidence" value="ECO:0000314"/>
    <property type="project" value="MGI"/>
</dbReference>
<dbReference type="GO" id="GO:0003692">
    <property type="term" value="F:left-handed Z-DNA binding"/>
    <property type="evidence" value="ECO:0000304"/>
    <property type="project" value="MGI"/>
</dbReference>
<dbReference type="GO" id="GO:0046872">
    <property type="term" value="F:metal ion binding"/>
    <property type="evidence" value="ECO:0007669"/>
    <property type="project" value="UniProtKB-KW"/>
</dbReference>
<dbReference type="GO" id="GO:0003723">
    <property type="term" value="F:RNA binding"/>
    <property type="evidence" value="ECO:0007669"/>
    <property type="project" value="UniProtKB-KW"/>
</dbReference>
<dbReference type="GO" id="GO:0006382">
    <property type="term" value="P:adenosine to inosine editing"/>
    <property type="evidence" value="ECO:0000314"/>
    <property type="project" value="UniProtKB"/>
</dbReference>
<dbReference type="GO" id="GO:0006915">
    <property type="term" value="P:apoptotic process"/>
    <property type="evidence" value="ECO:0000315"/>
    <property type="project" value="MGI"/>
</dbReference>
<dbReference type="GO" id="GO:0016553">
    <property type="term" value="P:base conversion or substitution editing"/>
    <property type="evidence" value="ECO:0000266"/>
    <property type="project" value="MGI"/>
</dbReference>
<dbReference type="GO" id="GO:0098586">
    <property type="term" value="P:cellular response to virus"/>
    <property type="evidence" value="ECO:0000314"/>
    <property type="project" value="UniProtKB"/>
</dbReference>
<dbReference type="GO" id="GO:0051607">
    <property type="term" value="P:defense response to virus"/>
    <property type="evidence" value="ECO:0000315"/>
    <property type="project" value="MGI"/>
</dbReference>
<dbReference type="GO" id="GO:0060216">
    <property type="term" value="P:definitive hemopoiesis"/>
    <property type="evidence" value="ECO:0000315"/>
    <property type="project" value="MGI"/>
</dbReference>
<dbReference type="GO" id="GO:0030218">
    <property type="term" value="P:erythrocyte differentiation"/>
    <property type="evidence" value="ECO:0000315"/>
    <property type="project" value="MGI"/>
</dbReference>
<dbReference type="GO" id="GO:0002244">
    <property type="term" value="P:hematopoietic progenitor cell differentiation"/>
    <property type="evidence" value="ECO:0000315"/>
    <property type="project" value="MGI"/>
</dbReference>
<dbReference type="GO" id="GO:0061484">
    <property type="term" value="P:hematopoietic stem cell homeostasis"/>
    <property type="evidence" value="ECO:0000315"/>
    <property type="project" value="MGI"/>
</dbReference>
<dbReference type="GO" id="GO:0097284">
    <property type="term" value="P:hepatocyte apoptotic process"/>
    <property type="evidence" value="ECO:0000315"/>
    <property type="project" value="MGI"/>
</dbReference>
<dbReference type="GO" id="GO:0001701">
    <property type="term" value="P:in utero embryonic development"/>
    <property type="evidence" value="ECO:0000315"/>
    <property type="project" value="MGI"/>
</dbReference>
<dbReference type="GO" id="GO:0045087">
    <property type="term" value="P:innate immune response"/>
    <property type="evidence" value="ECO:0007669"/>
    <property type="project" value="UniProtKB-KW"/>
</dbReference>
<dbReference type="GO" id="GO:0035196">
    <property type="term" value="P:miRNA processing"/>
    <property type="evidence" value="ECO:0000315"/>
    <property type="project" value="MGI"/>
</dbReference>
<dbReference type="GO" id="GO:0006397">
    <property type="term" value="P:mRNA processing"/>
    <property type="evidence" value="ECO:0007669"/>
    <property type="project" value="UniProtKB-KW"/>
</dbReference>
<dbReference type="GO" id="GO:1903944">
    <property type="term" value="P:negative regulation of hepatocyte apoptotic process"/>
    <property type="evidence" value="ECO:0000315"/>
    <property type="project" value="MGI"/>
</dbReference>
<dbReference type="GO" id="GO:1900369">
    <property type="term" value="P:negative regulation of post-transcriptional gene silencing by regulatory ncRNA"/>
    <property type="evidence" value="ECO:0000315"/>
    <property type="project" value="MGI"/>
</dbReference>
<dbReference type="GO" id="GO:0044387">
    <property type="term" value="P:negative regulation of protein kinase activity by regulation of protein phosphorylation"/>
    <property type="evidence" value="ECO:0000315"/>
    <property type="project" value="UniProtKB"/>
</dbReference>
<dbReference type="GO" id="GO:0060339">
    <property type="term" value="P:negative regulation of type I interferon-mediated signaling pathway"/>
    <property type="evidence" value="ECO:0000315"/>
    <property type="project" value="MGI"/>
</dbReference>
<dbReference type="GO" id="GO:0045071">
    <property type="term" value="P:negative regulation of viral genome replication"/>
    <property type="evidence" value="ECO:0000315"/>
    <property type="project" value="MGI"/>
</dbReference>
<dbReference type="GO" id="GO:0001649">
    <property type="term" value="P:osteoblast differentiation"/>
    <property type="evidence" value="ECO:0000315"/>
    <property type="project" value="MGI"/>
</dbReference>
<dbReference type="GO" id="GO:0045070">
    <property type="term" value="P:positive regulation of viral genome replication"/>
    <property type="evidence" value="ECO:0000315"/>
    <property type="project" value="UniProtKB"/>
</dbReference>
<dbReference type="GO" id="GO:0031054">
    <property type="term" value="P:pre-miRNA processing"/>
    <property type="evidence" value="ECO:0000266"/>
    <property type="project" value="MGI"/>
</dbReference>
<dbReference type="GO" id="GO:0035455">
    <property type="term" value="P:response to interferon-alpha"/>
    <property type="evidence" value="ECO:0000250"/>
    <property type="project" value="UniProtKB"/>
</dbReference>
<dbReference type="GO" id="GO:0009615">
    <property type="term" value="P:response to virus"/>
    <property type="evidence" value="ECO:0000250"/>
    <property type="project" value="UniProtKB"/>
</dbReference>
<dbReference type="GO" id="GO:0070922">
    <property type="term" value="P:RISC complex assembly"/>
    <property type="evidence" value="ECO:0000266"/>
    <property type="project" value="MGI"/>
</dbReference>
<dbReference type="GO" id="GO:0002566">
    <property type="term" value="P:somatic diversification of immune receptors via somatic mutation"/>
    <property type="evidence" value="ECO:0000314"/>
    <property type="project" value="MGI"/>
</dbReference>
<dbReference type="CDD" id="cd19913">
    <property type="entry name" value="DSRM_DRADA_rpt1"/>
    <property type="match status" value="1"/>
</dbReference>
<dbReference type="CDD" id="cd19915">
    <property type="entry name" value="DSRM_DRADA_rpt3"/>
    <property type="match status" value="1"/>
</dbReference>
<dbReference type="FunFam" id="1.10.10.10:FF:000313">
    <property type="entry name" value="double-stranded RNA-specific adenosine deaminase isoform X4"/>
    <property type="match status" value="1"/>
</dbReference>
<dbReference type="FunFam" id="3.30.160.20:FF:000005">
    <property type="entry name" value="Putative double-stranded RNA-specific adenosine deaminase"/>
    <property type="match status" value="3"/>
</dbReference>
<dbReference type="Gene3D" id="3.30.160.20">
    <property type="match status" value="3"/>
</dbReference>
<dbReference type="Gene3D" id="1.10.10.10">
    <property type="entry name" value="Winged helix-like DNA-binding domain superfamily/Winged helix DNA-binding domain"/>
    <property type="match status" value="2"/>
</dbReference>
<dbReference type="InterPro" id="IPR002466">
    <property type="entry name" value="A_deamin"/>
</dbReference>
<dbReference type="InterPro" id="IPR044456">
    <property type="entry name" value="ADAR1_DSRM_1"/>
</dbReference>
<dbReference type="InterPro" id="IPR044457">
    <property type="entry name" value="ADAR1_DSRM_3"/>
</dbReference>
<dbReference type="InterPro" id="IPR014720">
    <property type="entry name" value="dsRBD_dom"/>
</dbReference>
<dbReference type="InterPro" id="IPR036388">
    <property type="entry name" value="WH-like_DNA-bd_sf"/>
</dbReference>
<dbReference type="InterPro" id="IPR036390">
    <property type="entry name" value="WH_DNA-bd_sf"/>
</dbReference>
<dbReference type="InterPro" id="IPR042371">
    <property type="entry name" value="Z_dom"/>
</dbReference>
<dbReference type="PANTHER" id="PTHR10910:SF107">
    <property type="entry name" value="DOUBLE-STRANDED RNA-SPECIFIC ADENOSINE DEAMINASE"/>
    <property type="match status" value="1"/>
</dbReference>
<dbReference type="PANTHER" id="PTHR10910">
    <property type="entry name" value="EUKARYOTE SPECIFIC DSRNA BINDING PROTEIN"/>
    <property type="match status" value="1"/>
</dbReference>
<dbReference type="Pfam" id="PF02137">
    <property type="entry name" value="A_deamin"/>
    <property type="match status" value="1"/>
</dbReference>
<dbReference type="Pfam" id="PF00035">
    <property type="entry name" value="dsrm"/>
    <property type="match status" value="3"/>
</dbReference>
<dbReference type="Pfam" id="PF02295">
    <property type="entry name" value="z-alpha"/>
    <property type="match status" value="2"/>
</dbReference>
<dbReference type="SMART" id="SM00552">
    <property type="entry name" value="ADEAMc"/>
    <property type="match status" value="1"/>
</dbReference>
<dbReference type="SMART" id="SM00358">
    <property type="entry name" value="DSRM"/>
    <property type="match status" value="3"/>
</dbReference>
<dbReference type="SMART" id="SM00550">
    <property type="entry name" value="Zalpha"/>
    <property type="match status" value="2"/>
</dbReference>
<dbReference type="SUPFAM" id="SSF54768">
    <property type="entry name" value="dsRNA-binding domain-like"/>
    <property type="match status" value="3"/>
</dbReference>
<dbReference type="SUPFAM" id="SSF46785">
    <property type="entry name" value="Winged helix' DNA-binding domain"/>
    <property type="match status" value="2"/>
</dbReference>
<dbReference type="PROSITE" id="PS50141">
    <property type="entry name" value="A_DEAMIN_EDITASE"/>
    <property type="match status" value="1"/>
</dbReference>
<dbReference type="PROSITE" id="PS50137">
    <property type="entry name" value="DS_RBD"/>
    <property type="match status" value="3"/>
</dbReference>
<dbReference type="PROSITE" id="PS50139">
    <property type="entry name" value="Z_BINDING"/>
    <property type="match status" value="2"/>
</dbReference>
<keyword id="KW-0025">Alternative splicing</keyword>
<keyword id="KW-0051">Antiviral defense</keyword>
<keyword id="KW-0963">Cytoplasm</keyword>
<keyword id="KW-0238">DNA-binding</keyword>
<keyword id="KW-0378">Hydrolase</keyword>
<keyword id="KW-0391">Immunity</keyword>
<keyword id="KW-0399">Innate immunity</keyword>
<keyword id="KW-1017">Isopeptide bond</keyword>
<keyword id="KW-0479">Metal-binding</keyword>
<keyword id="KW-0488">Methylation</keyword>
<keyword id="KW-0507">mRNA processing</keyword>
<keyword id="KW-0539">Nucleus</keyword>
<keyword id="KW-0597">Phosphoprotein</keyword>
<keyword id="KW-1185">Reference proteome</keyword>
<keyword id="KW-0677">Repeat</keyword>
<keyword id="KW-0694">RNA-binding</keyword>
<keyword id="KW-0943">RNA-mediated gene silencing</keyword>
<keyword id="KW-0804">Transcription</keyword>
<keyword id="KW-0805">Transcription regulation</keyword>
<keyword id="KW-0832">Ubl conjugation</keyword>
<keyword id="KW-0862">Zinc</keyword>
<feature type="chain" id="PRO_0000171775" description="Double-stranded RNA-specific adenosine deaminase">
    <location>
        <begin position="1"/>
        <end position="1178"/>
    </location>
</feature>
<feature type="domain" description="Z-binding 1" evidence="4">
    <location>
        <begin position="135"/>
        <end position="201"/>
    </location>
</feature>
<feature type="domain" description="Z-binding 2" evidence="4">
    <location>
        <begin position="246"/>
        <end position="310"/>
    </location>
</feature>
<feature type="domain" description="DRBM 1" evidence="6">
    <location>
        <begin position="456"/>
        <end position="524"/>
    </location>
</feature>
<feature type="domain" description="DRBM 2" evidence="6">
    <location>
        <begin position="567"/>
        <end position="635"/>
    </location>
</feature>
<feature type="domain" description="DRBM 3" evidence="6">
    <location>
        <begin position="675"/>
        <end position="743"/>
    </location>
</feature>
<feature type="domain" description="A to I editase" evidence="5">
    <location>
        <begin position="835"/>
        <end position="1170"/>
    </location>
</feature>
<feature type="region of interest" description="Disordered" evidence="7">
    <location>
        <begin position="1"/>
        <end position="40"/>
    </location>
</feature>
<feature type="region of interest" description="Interaction with Z-DNA" evidence="2">
    <location>
        <begin position="135"/>
        <end position="204"/>
    </location>
</feature>
<feature type="region of interest" description="Disordered" evidence="7">
    <location>
        <begin position="221"/>
        <end position="244"/>
    </location>
</feature>
<feature type="region of interest" description="Disordered" evidence="7">
    <location>
        <begin position="316"/>
        <end position="383"/>
    </location>
</feature>
<feature type="region of interest" description="Disordered" evidence="7">
    <location>
        <begin position="527"/>
        <end position="564"/>
    </location>
</feature>
<feature type="region of interest" description="Disordered" evidence="7">
    <location>
        <begin position="631"/>
        <end position="657"/>
    </location>
</feature>
<feature type="region of interest" description="N-terminal extension of DRBM 3 and constituent of a bi-partite nuclear localization signal" evidence="2">
    <location>
        <begin position="665"/>
        <end position="674"/>
    </location>
</feature>
<feature type="region of interest" description="C-terminal extension of DRBM 3 and constituent of a bi-partite nuclear localization signal" evidence="2">
    <location>
        <begin position="744"/>
        <end position="750"/>
    </location>
</feature>
<feature type="compositionally biased region" description="Acidic residues" evidence="7">
    <location>
        <begin position="229"/>
        <end position="238"/>
    </location>
</feature>
<feature type="compositionally biased region" description="Low complexity" evidence="7">
    <location>
        <begin position="323"/>
        <end position="337"/>
    </location>
</feature>
<feature type="compositionally biased region" description="Basic and acidic residues" evidence="7">
    <location>
        <begin position="360"/>
        <end position="379"/>
    </location>
</feature>
<feature type="compositionally biased region" description="Basic and acidic residues" evidence="7">
    <location>
        <begin position="527"/>
        <end position="550"/>
    </location>
</feature>
<feature type="compositionally biased region" description="Polar residues" evidence="7">
    <location>
        <begin position="554"/>
        <end position="564"/>
    </location>
</feature>
<feature type="compositionally biased region" description="Low complexity" evidence="7">
    <location>
        <begin position="635"/>
        <end position="648"/>
    </location>
</feature>
<feature type="active site" description="Proton donor" evidence="5">
    <location>
        <position position="861"/>
    </location>
</feature>
<feature type="binding site" evidence="5">
    <location>
        <position position="859"/>
    </location>
    <ligand>
        <name>Zn(2+)</name>
        <dbReference type="ChEBI" id="CHEBI:29105"/>
    </ligand>
</feature>
<feature type="binding site" evidence="5">
    <location>
        <position position="915"/>
    </location>
    <ligand>
        <name>Zn(2+)</name>
        <dbReference type="ChEBI" id="CHEBI:29105"/>
    </ligand>
</feature>
<feature type="binding site" evidence="5">
    <location>
        <position position="985"/>
    </location>
    <ligand>
        <name>Zn(2+)</name>
        <dbReference type="ChEBI" id="CHEBI:29105"/>
    </ligand>
</feature>
<feature type="modified residue" description="Asymmetric dimethylarginine" evidence="24">
    <location>
        <position position="30"/>
    </location>
</feature>
<feature type="modified residue" description="Asymmetric dimethylarginine" evidence="24">
    <location>
        <position position="42"/>
    </location>
</feature>
<feature type="modified residue" description="Phosphoserine" evidence="3">
    <location>
        <position position="231"/>
    </location>
</feature>
<feature type="modified residue" description="Phosphoserine" evidence="3">
    <location>
        <position position="238"/>
    </location>
</feature>
<feature type="modified residue" description="Phosphoserine" evidence="2">
    <location>
        <position position="434"/>
    </location>
</feature>
<feature type="modified residue" description="Phosphoserine" evidence="2">
    <location>
        <position position="567"/>
    </location>
</feature>
<feature type="modified residue" description="Phosphoserine" evidence="23">
    <location>
        <position position="582"/>
    </location>
</feature>
<feature type="modified residue" description="Phosphoserine" evidence="2">
    <location>
        <position position="589"/>
    </location>
</feature>
<feature type="modified residue" description="Phosphothreonine" evidence="2">
    <location>
        <position position="757"/>
    </location>
</feature>
<feature type="modified residue" description="Phosphoserine" evidence="2">
    <location>
        <position position="763"/>
    </location>
</feature>
<feature type="modified residue" description="Phosphoserine" evidence="2">
    <location>
        <position position="772"/>
    </location>
</feature>
<feature type="modified residue" description="Phosphoserine" evidence="2">
    <location>
        <position position="774"/>
    </location>
</feature>
<feature type="cross-link" description="Glycyl lysine isopeptide (Lys-Gly) (interchain with G-Cter in SUMO); alternate" evidence="1">
    <location>
        <position position="371"/>
    </location>
</feature>
<feature type="cross-link" description="Glycyl lysine isopeptide (Lys-Gly) (interchain with G-Cter in SUMO1); alternate" evidence="2">
    <location>
        <position position="371"/>
    </location>
</feature>
<feature type="cross-link" description="Glycyl lysine isopeptide (Lys-Gly) (interchain with G-Cter in SUMO2); alternate" evidence="2">
    <location>
        <position position="371"/>
    </location>
</feature>
<feature type="cross-link" description="Glycyl lysine isopeptide (Lys-Gly) (interchain with G-Cter in SUMO2)" evidence="2">
    <location>
        <position position="824"/>
    </location>
</feature>
<feature type="splice variant" id="VSP_019236" description="In isoform 3 and isoform 4." evidence="19">
    <location>
        <begin position="1"/>
        <end position="518"/>
    </location>
</feature>
<feature type="splice variant" id="VSP_019237" description="In isoform 5." evidence="19">
    <location>
        <begin position="1"/>
        <end position="248"/>
    </location>
</feature>
<feature type="splice variant" id="VSP_008875" description="In isoform 2 and isoform 3." evidence="18 19 20 21">
    <location>
        <begin position="756"/>
        <end position="781"/>
    </location>
</feature>
<feature type="sequence variant" description="In strain: Czech II." evidence="13">
    <original>L</original>
    <variation>S</variation>
    <location>
        <position position="20"/>
    </location>
</feature>
<feature type="sequence variant" description="In strain: Czech II." evidence="13">
    <original>P</original>
    <variation>L</variation>
    <location>
        <position position="32"/>
    </location>
</feature>
<feature type="sequence variant" description="In strain: Czech II.">
    <original>T</original>
    <variation>P</variation>
    <location>
        <position position="120"/>
    </location>
</feature>
<feature type="sequence variant" description="In strain: Czech II." evidence="13">
    <original>P</original>
    <variation>L</variation>
    <location>
        <position position="330"/>
    </location>
</feature>
<feature type="sequence conflict" description="In Ref. 1; AAK16102." evidence="22" ref="1">
    <original>N</original>
    <variation>D</variation>
    <location>
        <position position="415"/>
    </location>
</feature>
<feature type="sequence conflict" description="In Ref. 3; AAC06233." evidence="22" ref="3">
    <original>Q</original>
    <variation>K</variation>
    <location>
        <position position="644"/>
    </location>
</feature>
<feature type="sequence conflict" description="In Ref. 3; AAC06233." evidence="22" ref="3">
    <original>K</original>
    <variation>R</variation>
    <location>
        <position position="730"/>
    </location>
</feature>
<feature type="sequence conflict" description="In Ref. 3; AAC06233." evidence="22" ref="3">
    <original>L</original>
    <variation>H</variation>
    <location>
        <position position="920"/>
    </location>
</feature>
<feature type="sequence conflict" description="In Ref. 5; BAC40888." evidence="22" ref="5">
    <original>T</original>
    <variation>A</variation>
    <location>
        <position position="1003"/>
    </location>
</feature>
<feature type="sequence conflict" description="In Ref. 1; AAK16102." evidence="22" ref="1">
    <original>P</original>
    <variation>S</variation>
    <location>
        <position position="1098"/>
    </location>
</feature>
<feature type="sequence conflict" description="In Ref. 1; AAK16102." evidence="22" ref="1">
    <original>K</original>
    <variation>R</variation>
    <location>
        <position position="1149"/>
    </location>
</feature>
<feature type="sequence conflict" description="In Ref. 5; BAC40888." evidence="22" ref="5">
    <original>C</original>
    <variation>R</variation>
    <location>
        <position position="1173"/>
    </location>
</feature>
<accession>Q99MU3</accession>
<accession>O70375</accession>
<accession>Q80UZ6</accession>
<accession>Q8C222</accession>
<accession>Q99MU2</accession>
<accession>Q99MU4</accession>
<accession>Q99MU7</accession>
<comment type="function">
    <text evidence="14 16 17">Catalyzes the hydrolytic deamination of adenosine to inosine in double-stranded RNA (dsRNA) referred to as A-to-I RNA editing. This may affect gene expression and function in a number of ways that include mRNA translation by changing codons and hence the amino acid sequence of proteins since the translational machinery read the inosine as a guanosine; pre-mRNA splicing by altering splice site recognition sequences; RNA stability by changing sequences involved in nuclease recognition; genetic stability in the case of RNA virus genomes by changing sequences during viral RNA replication; and RNA structure-dependent activities such as microRNA production or targeting or protein-RNA interactions. Can edit both viral and cellular RNAs and can edit RNAs at multiple sites (hyper-editing) or at specific sites (site-specific editing). Its cellular RNA substrates include: bladder cancer-associated protein (BLCAP), neurotransmitter receptors for glutamate (GRIA2) and serotonin (HTR2C) and GABA receptor (GABRA3). Site-specific RNA editing of transcripts encoding these proteins results in amino acid substitutions which consequently alters their functional activities. Exhibits low-level editing at the GRIA2 Q/R site, but edits efficiently at the R/G site and HOTSPOT1. Does not affect polyomavirus replication but provides protection against virus-induced cytopathic effects. Essential for embryonic development and cell survival and plays a critical role in the maintenance of hematopoietic stem cells.</text>
</comment>
<comment type="catalytic activity">
    <reaction>
        <text>adenosine in double-stranded RNA + H2O + H(+) = inosine in double-stranded RNA + NH4(+)</text>
        <dbReference type="Rhea" id="RHEA:10120"/>
        <dbReference type="Rhea" id="RHEA-COMP:13885"/>
        <dbReference type="Rhea" id="RHEA-COMP:13886"/>
        <dbReference type="ChEBI" id="CHEBI:15377"/>
        <dbReference type="ChEBI" id="CHEBI:15378"/>
        <dbReference type="ChEBI" id="CHEBI:28938"/>
        <dbReference type="ChEBI" id="CHEBI:74411"/>
        <dbReference type="ChEBI" id="CHEBI:82852"/>
        <dbReference type="EC" id="3.5.4.37"/>
    </reaction>
</comment>
<comment type="subunit">
    <text evidence="2 8 15 16">Homodimer. Homodimerization is essential for its catalytic activity (PubMed:12618436). Isoform 5 can form heterodimers with ADARB1/ADAR2. Isoform 1 and isoform 5 (via DRBM 3 domain) interact with TNPO1. Isoform 5 (via DRBM domains) interacts with XPO5. Isoform 1 and isoform 5 can interact with UPF1 (By similarity). Isoform 1 interacts with ILF2/NF45 and ILF3/NF90 (PubMed:16055709). Binding to ILF3/NF90 up-regulates ILF3-mediated gene expression. Isoform 1 and isoform 5 interact with EIF2AK2/PKR (PubMed:17079286).</text>
</comment>
<comment type="subcellular location">
    <molecule>Isoform 1</molecule>
    <subcellularLocation>
        <location>Cytoplasm</location>
    </subcellularLocation>
    <subcellularLocation>
        <location>Nucleus</location>
        <location>Nucleolus</location>
    </subcellularLocation>
    <text>Long forms starting at Met-1 are found predominantly in cytoplasm. Shuttles between the cytoplasm and nucleus.</text>
</comment>
<comment type="subcellular location">
    <molecule>Isoform 2</molecule>
    <subcellularLocation>
        <location>Cytoplasm</location>
    </subcellularLocation>
    <subcellularLocation>
        <location>Nucleus</location>
        <location>Nucleolus</location>
    </subcellularLocation>
    <text>Long forms starting at Met-1 are found predominantly in cytoplasm.</text>
</comment>
<comment type="subcellular location">
    <molecule>Isoform 3</molecule>
    <subcellularLocation>
        <location>Nucleus</location>
        <location>Nucleolus</location>
    </subcellularLocation>
    <text>Short forms starting at Met-519 are found exclusively in the nucleolus.</text>
</comment>
<comment type="subcellular location">
    <molecule>Isoform 4</molecule>
    <subcellularLocation>
        <location>Nucleus</location>
        <location>Nucleolus</location>
    </subcellularLocation>
    <text>Short forms starting at Met-519 are found exclusively in the nucleolus.</text>
</comment>
<comment type="alternative products">
    <event type="alternative splicing"/>
    <isoform>
        <id>Q99MU3-1</id>
        <name>1</name>
        <name>ADAR1Lb</name>
        <name>p150</name>
        <sequence type="displayed"/>
    </isoform>
    <isoform>
        <id>Q99MU3-2</id>
        <name>2</name>
        <name>ADAR1La</name>
        <sequence type="described" ref="VSP_008875"/>
    </isoform>
    <isoform>
        <id>Q99MU3-3</id>
        <name>3</name>
        <name>ADAR1Sa</name>
        <sequence type="described" ref="VSP_019236 VSP_008875"/>
    </isoform>
    <isoform>
        <id>Q99MU3-4</id>
        <name>4</name>
        <name>ADAR1Sb</name>
        <name>p80</name>
        <sequence type="described" ref="VSP_019236"/>
    </isoform>
    <isoform>
        <id>Q99MU3-5</id>
        <name>5</name>
        <name>p110</name>
        <sequence type="described" ref="VSP_019237"/>
    </isoform>
</comment>
<comment type="tissue specificity">
    <text evidence="10">Highest levels in brain and spleen. Lowest levels in liver.</text>
</comment>
<comment type="induction">
    <text evidence="9 10">By inflammation. Under normal conditions, long forms starting at Met-1 are dominant. Inflammation causes selective induction of short forms starting at Met-519.</text>
</comment>
<comment type="domain">
    <text evidence="2">The third dsRNA-binding domain (DRBM 3) contains an additional N-terminal alpha-helix that is part of a bi-partite nuclear localization signal, together with the sequence immediately C-terminal to DRBM 3. The presence of DRBM 3 is important to bring together the N-terminal and the C-terminal part of the bi-partite nuclear localization signal for import mediated by TNPO1. RNA binding interferes with nuclear import.</text>
</comment>
<comment type="domain">
    <text evidence="4">The first Z-binding domain binds Z-DNA.</text>
</comment>
<comment type="PTM">
    <text evidence="2">Sumoylation reduces RNA-editing activity.</text>
</comment>
<comment type="disruption phenotype">
    <text evidence="11 12">Mice do not survive past 11.0-12.5 dpc, and embryos display widespread apoptosis, a rapidly disintegrating liver structure and severe defects in hematopoiesis.</text>
</comment>
<gene>
    <name type="primary">Adar</name>
</gene>
<sequence>MSQGFRGPTGVFPHQTQSYLDPSHEHSKWRYPQPQGPESYPRSFQLQQIEFLKGRLPEAPLIGIQTQSLPPFLPGHWPRFPGPPAQDRQLEIWEFPRSVTLRNQGFHIGPPLPPPHSRGTPWRGADGLCSHFRELSISQSPEQKVLNRLEELGEGKATTAHVLARELRIPKRDINRILYSLEKKGKLHRGRGKPPLWSLVPLSQAWTQPPGVVNPDSCIQEFPRGEPGLDSEDGDPASDLEGPSEPLDMAEIKEKICDYLFNVSNSSALNLAKNIGLTKARDVTSVLIDLERQGDVYRQGATPPIWYLTDKKRERLQMKRSTHSAPAPTPTAVPEATRSPSFPACHPPPAGASSSVAASKRVENGQEPAIKHESRHEARPGPMRLRPHAYHNGPSRAGYVASENGQWATDDIPDNLNSIHTAPGEFRAIMEMPSFYSPTLPRCSPYKKLTECQLKNPVSGLLEYAQFTSQTCDFNLIEQSGPSHEPRFKFQVVINGREFPPAEAGSKKVAKQDAAVKAMAILLREAKAKDSGQPEDLSHCPMEEDSEKPAEAQAPSSSATSLFSGKSPVTTLLECMHKLGNSCEFRLLSKEGPAHDPKFQYCVAVGAQTFPPVSAPSKKVAKQMAAEEAMKALQEEAASSADDQSGGANTDSLDESMAPNKIRRIGELVRYLNTNPVGGLLEYARSHGFAAEFKLIDQSGPPHEPKFVYQAKVGGRWFPAVCAHSKKQGKQDAADAALRVLIGESEKAEQLGFAEVTPVTGASLRRTMLLLSRSPDAHPKTLPLSGSTFHDQIAMLSHRCFNALTNSFQPSLLGRKILAAIIMKRDPEDMGVVVSLGTGNRCVKGDSLSLKGETVNDCHAEIISRRGFIRFLYSELMKYNHHTAKNSIFELARGGEKLQIKKTVSFHLYISTAPCGDGALFDKSCSDRAVESTESRHYPVFENPKQGKLRTKVENGEGTIPVESSDIVPTWDGIRLGERLRTMSCSDKILRWNVLGLQGALLTHFLQPVYLKSVTLGYLFSQGHLTRAICCRVTRDGKAFEDGLRYPFIVNHPKVGRVSVYDSKRQSGKTKETSVNWCMADGYDLEILDGTRGTVDGPGKELSRVSKKNIFLQFKKLCSFRARRDLLQLSYGEAKKAARDYDLAKNYFKKSLRDMGYGNWISKPQEEKNFYLCPVPND</sequence>
<proteinExistence type="evidence at protein level"/>
<name>DSRAD_MOUSE</name>
<evidence type="ECO:0000250" key="1"/>
<evidence type="ECO:0000250" key="2">
    <source>
        <dbReference type="UniProtKB" id="P55265"/>
    </source>
</evidence>
<evidence type="ECO:0000250" key="3">
    <source>
        <dbReference type="UniProtKB" id="P55266"/>
    </source>
</evidence>
<evidence type="ECO:0000255" key="4">
    <source>
        <dbReference type="PROSITE-ProRule" id="PRU00073"/>
    </source>
</evidence>
<evidence type="ECO:0000255" key="5">
    <source>
        <dbReference type="PROSITE-ProRule" id="PRU00240"/>
    </source>
</evidence>
<evidence type="ECO:0000255" key="6">
    <source>
        <dbReference type="PROSITE-ProRule" id="PRU00266"/>
    </source>
</evidence>
<evidence type="ECO:0000256" key="7">
    <source>
        <dbReference type="SAM" id="MobiDB-lite"/>
    </source>
</evidence>
<evidence type="ECO:0000269" key="8">
    <source>
    </source>
</evidence>
<evidence type="ECO:0000269" key="9">
    <source>
    </source>
</evidence>
<evidence type="ECO:0000269" key="10">
    <source>
    </source>
</evidence>
<evidence type="ECO:0000269" key="11">
    <source>
    </source>
</evidence>
<evidence type="ECO:0000269" key="12">
    <source>
    </source>
</evidence>
<evidence type="ECO:0000269" key="13">
    <source>
    </source>
</evidence>
<evidence type="ECO:0000269" key="14">
    <source>
    </source>
</evidence>
<evidence type="ECO:0000269" key="15">
    <source>
    </source>
</evidence>
<evidence type="ECO:0000269" key="16">
    <source>
    </source>
</evidence>
<evidence type="ECO:0000269" key="17">
    <source>
    </source>
</evidence>
<evidence type="ECO:0000303" key="18">
    <source>
    </source>
</evidence>
<evidence type="ECO:0000303" key="19">
    <source>
    </source>
</evidence>
<evidence type="ECO:0000303" key="20">
    <source>
    </source>
</evidence>
<evidence type="ECO:0000303" key="21">
    <source ref="3"/>
</evidence>
<evidence type="ECO:0000305" key="22"/>
<evidence type="ECO:0007744" key="23">
    <source>
    </source>
</evidence>
<evidence type="ECO:0007744" key="24">
    <source>
    </source>
</evidence>
<protein>
    <recommendedName>
        <fullName>Double-stranded RNA-specific adenosine deaminase</fullName>
        <shortName>DRADA</shortName>
        <ecNumber>3.5.4.37</ecNumber>
    </recommendedName>
    <alternativeName>
        <fullName>RNA adenosine deaminase 1</fullName>
    </alternativeName>
</protein>
<organism>
    <name type="scientific">Mus musculus</name>
    <name type="common">Mouse</name>
    <dbReference type="NCBI Taxonomy" id="10090"/>
    <lineage>
        <taxon>Eukaryota</taxon>
        <taxon>Metazoa</taxon>
        <taxon>Chordata</taxon>
        <taxon>Craniata</taxon>
        <taxon>Vertebrata</taxon>
        <taxon>Euteleostomi</taxon>
        <taxon>Mammalia</taxon>
        <taxon>Eutheria</taxon>
        <taxon>Euarchontoglires</taxon>
        <taxon>Glires</taxon>
        <taxon>Rodentia</taxon>
        <taxon>Myomorpha</taxon>
        <taxon>Muroidea</taxon>
        <taxon>Muridae</taxon>
        <taxon>Murinae</taxon>
        <taxon>Mus</taxon>
        <taxon>Mus</taxon>
    </lineage>
</organism>
<reference key="1">
    <citation type="journal article" date="2003" name="J. Biol. Chem.">
        <title>Intracellular localization of differentially regulated RNA-specific adenosine deaminase isoforms in inflammation.</title>
        <authorList>
            <person name="Yang J.-H."/>
            <person name="Nie Y."/>
            <person name="Zhao Q."/>
            <person name="Su Y."/>
            <person name="Pypaert M."/>
            <person name="Su H."/>
            <person name="Rabinovici R."/>
        </authorList>
    </citation>
    <scope>NUCLEOTIDE SEQUENCE [MRNA] (ISOFORMS 1; 2; 3; 4 AND 5)</scope>
    <scope>SUBCELLULAR LOCATION</scope>
    <scope>TISSUE SPECIFICITY</scope>
    <scope>INDUCTION</scope>
    <source>
        <strain>C57BL/6J</strain>
        <tissue>Spleen</tissue>
    </source>
</reference>
<reference key="2">
    <citation type="journal article" date="2003" name="Immunology">
        <title>Widespread inosine-containing mRNA in lymphocytes regulated by ADAR1 in response to inflammation.</title>
        <authorList>
            <person name="Yang J.-H."/>
            <person name="Luo X."/>
            <person name="Nie Y."/>
            <person name="Su Y."/>
            <person name="Zhao Q."/>
            <person name="Kabir K."/>
            <person name="Zhang D.-X."/>
            <person name="Rabinovici R."/>
        </authorList>
    </citation>
    <scope>NUCLEOTIDE SEQUENCE [MRNA] (ISOFORM 2)</scope>
    <scope>ALTERNATIVE SPLICING</scope>
    <scope>INDUCTION</scope>
</reference>
<reference key="3">
    <citation type="submission" date="1998-03" db="EMBL/GenBank/DDBJ databases">
        <title>cDNA for mouse double-stranded RNA-specific adenosine deaminase (ADAR1).</title>
        <authorList>
            <person name="Young S.B."/>
            <person name="Carmichael G.G."/>
        </authorList>
    </citation>
    <scope>NUCLEOTIDE SEQUENCE [MRNA] (ISOFORM 2)</scope>
    <source>
        <tissue>Fibroblast</tissue>
    </source>
</reference>
<reference key="4">
    <citation type="journal article" date="2004" name="Genome Res.">
        <title>The status, quality, and expansion of the NIH full-length cDNA project: the Mammalian Gene Collection (MGC).</title>
        <authorList>
            <consortium name="The MGC Project Team"/>
        </authorList>
    </citation>
    <scope>NUCLEOTIDE SEQUENCE [LARGE SCALE MRNA] (ISOFORM 2)</scope>
    <scope>VARIANTS SER-20; LEU-32 AND LEU-330</scope>
    <source>
        <strain>Czech II</strain>
        <tissue>Mammary tumor</tissue>
    </source>
</reference>
<reference key="5">
    <citation type="journal article" date="2005" name="Science">
        <title>The transcriptional landscape of the mammalian genome.</title>
        <authorList>
            <person name="Carninci P."/>
            <person name="Kasukawa T."/>
            <person name="Katayama S."/>
            <person name="Gough J."/>
            <person name="Frith M.C."/>
            <person name="Maeda N."/>
            <person name="Oyama R."/>
            <person name="Ravasi T."/>
            <person name="Lenhard B."/>
            <person name="Wells C."/>
            <person name="Kodzius R."/>
            <person name="Shimokawa K."/>
            <person name="Bajic V.B."/>
            <person name="Brenner S.E."/>
            <person name="Batalov S."/>
            <person name="Forrest A.R."/>
            <person name="Zavolan M."/>
            <person name="Davis M.J."/>
            <person name="Wilming L.G."/>
            <person name="Aidinis V."/>
            <person name="Allen J.E."/>
            <person name="Ambesi-Impiombato A."/>
            <person name="Apweiler R."/>
            <person name="Aturaliya R.N."/>
            <person name="Bailey T.L."/>
            <person name="Bansal M."/>
            <person name="Baxter L."/>
            <person name="Beisel K.W."/>
            <person name="Bersano T."/>
            <person name="Bono H."/>
            <person name="Chalk A.M."/>
            <person name="Chiu K.P."/>
            <person name="Choudhary V."/>
            <person name="Christoffels A."/>
            <person name="Clutterbuck D.R."/>
            <person name="Crowe M.L."/>
            <person name="Dalla E."/>
            <person name="Dalrymple B.P."/>
            <person name="de Bono B."/>
            <person name="Della Gatta G."/>
            <person name="di Bernardo D."/>
            <person name="Down T."/>
            <person name="Engstrom P."/>
            <person name="Fagiolini M."/>
            <person name="Faulkner G."/>
            <person name="Fletcher C.F."/>
            <person name="Fukushima T."/>
            <person name="Furuno M."/>
            <person name="Futaki S."/>
            <person name="Gariboldi M."/>
            <person name="Georgii-Hemming P."/>
            <person name="Gingeras T.R."/>
            <person name="Gojobori T."/>
            <person name="Green R.E."/>
            <person name="Gustincich S."/>
            <person name="Harbers M."/>
            <person name="Hayashi Y."/>
            <person name="Hensch T.K."/>
            <person name="Hirokawa N."/>
            <person name="Hill D."/>
            <person name="Huminiecki L."/>
            <person name="Iacono M."/>
            <person name="Ikeo K."/>
            <person name="Iwama A."/>
            <person name="Ishikawa T."/>
            <person name="Jakt M."/>
            <person name="Kanapin A."/>
            <person name="Katoh M."/>
            <person name="Kawasawa Y."/>
            <person name="Kelso J."/>
            <person name="Kitamura H."/>
            <person name="Kitano H."/>
            <person name="Kollias G."/>
            <person name="Krishnan S.P."/>
            <person name="Kruger A."/>
            <person name="Kummerfeld S.K."/>
            <person name="Kurochkin I.V."/>
            <person name="Lareau L.F."/>
            <person name="Lazarevic D."/>
            <person name="Lipovich L."/>
            <person name="Liu J."/>
            <person name="Liuni S."/>
            <person name="McWilliam S."/>
            <person name="Madan Babu M."/>
            <person name="Madera M."/>
            <person name="Marchionni L."/>
            <person name="Matsuda H."/>
            <person name="Matsuzawa S."/>
            <person name="Miki H."/>
            <person name="Mignone F."/>
            <person name="Miyake S."/>
            <person name="Morris K."/>
            <person name="Mottagui-Tabar S."/>
            <person name="Mulder N."/>
            <person name="Nakano N."/>
            <person name="Nakauchi H."/>
            <person name="Ng P."/>
            <person name="Nilsson R."/>
            <person name="Nishiguchi S."/>
            <person name="Nishikawa S."/>
            <person name="Nori F."/>
            <person name="Ohara O."/>
            <person name="Okazaki Y."/>
            <person name="Orlando V."/>
            <person name="Pang K.C."/>
            <person name="Pavan W.J."/>
            <person name="Pavesi G."/>
            <person name="Pesole G."/>
            <person name="Petrovsky N."/>
            <person name="Piazza S."/>
            <person name="Reed J."/>
            <person name="Reid J.F."/>
            <person name="Ring B.Z."/>
            <person name="Ringwald M."/>
            <person name="Rost B."/>
            <person name="Ruan Y."/>
            <person name="Salzberg S.L."/>
            <person name="Sandelin A."/>
            <person name="Schneider C."/>
            <person name="Schoenbach C."/>
            <person name="Sekiguchi K."/>
            <person name="Semple C.A."/>
            <person name="Seno S."/>
            <person name="Sessa L."/>
            <person name="Sheng Y."/>
            <person name="Shibata Y."/>
            <person name="Shimada H."/>
            <person name="Shimada K."/>
            <person name="Silva D."/>
            <person name="Sinclair B."/>
            <person name="Sperling S."/>
            <person name="Stupka E."/>
            <person name="Sugiura K."/>
            <person name="Sultana R."/>
            <person name="Takenaka Y."/>
            <person name="Taki K."/>
            <person name="Tammoja K."/>
            <person name="Tan S.L."/>
            <person name="Tang S."/>
            <person name="Taylor M.S."/>
            <person name="Tegner J."/>
            <person name="Teichmann S.A."/>
            <person name="Ueda H.R."/>
            <person name="van Nimwegen E."/>
            <person name="Verardo R."/>
            <person name="Wei C.L."/>
            <person name="Yagi K."/>
            <person name="Yamanishi H."/>
            <person name="Zabarovsky E."/>
            <person name="Zhu S."/>
            <person name="Zimmer A."/>
            <person name="Hide W."/>
            <person name="Bult C."/>
            <person name="Grimmond S.M."/>
            <person name="Teasdale R.D."/>
            <person name="Liu E.T."/>
            <person name="Brusic V."/>
            <person name="Quackenbush J."/>
            <person name="Wahlestedt C."/>
            <person name="Mattick J.S."/>
            <person name="Hume D.A."/>
            <person name="Kai C."/>
            <person name="Sasaki D."/>
            <person name="Tomaru Y."/>
            <person name="Fukuda S."/>
            <person name="Kanamori-Katayama M."/>
            <person name="Suzuki M."/>
            <person name="Aoki J."/>
            <person name="Arakawa T."/>
            <person name="Iida J."/>
            <person name="Imamura K."/>
            <person name="Itoh M."/>
            <person name="Kato T."/>
            <person name="Kawaji H."/>
            <person name="Kawagashira N."/>
            <person name="Kawashima T."/>
            <person name="Kojima M."/>
            <person name="Kondo S."/>
            <person name="Konno H."/>
            <person name="Nakano K."/>
            <person name="Ninomiya N."/>
            <person name="Nishio T."/>
            <person name="Okada M."/>
            <person name="Plessy C."/>
            <person name="Shibata K."/>
            <person name="Shiraki T."/>
            <person name="Suzuki S."/>
            <person name="Tagami M."/>
            <person name="Waki K."/>
            <person name="Watahiki A."/>
            <person name="Okamura-Oho Y."/>
            <person name="Suzuki H."/>
            <person name="Kawai J."/>
            <person name="Hayashizaki Y."/>
        </authorList>
    </citation>
    <scope>NUCLEOTIDE SEQUENCE [LARGE SCALE MRNA] OF 1-1173 (ISOFORM 1)</scope>
    <source>
        <strain>C57BL/6J</strain>
        <tissue>Dendritic cell</tissue>
    </source>
</reference>
<reference key="6">
    <citation type="journal article" date="2003" name="J. Biol. Chem.">
        <title>Requirement of dimerization for RNA editing activity of adenosine deaminases acting on RNA.</title>
        <authorList>
            <person name="Cho D.-S.C."/>
            <person name="Yang W."/>
            <person name="Lee J.T."/>
            <person name="Shiekhattar R."/>
            <person name="Murray J.M."/>
            <person name="Nishikura K."/>
        </authorList>
    </citation>
    <scope>HOMODIMERIZATION</scope>
    <scope>SUBUNIT</scope>
</reference>
<reference key="7">
    <citation type="journal article" date="2004" name="J. Biol. Chem.">
        <title>Liver disintegration in the mouse embryo caused by deficiency in the RNA-editing enzyme ADAR1.</title>
        <authorList>
            <person name="Hartner J.C."/>
            <person name="Schmittwolf C."/>
            <person name="Kispert A."/>
            <person name="Mueller A.M."/>
            <person name="Higuchi M."/>
            <person name="Seeburg P.H."/>
        </authorList>
    </citation>
    <scope>DISRUPTION PHENOTYPE</scope>
</reference>
<reference key="8">
    <citation type="journal article" date="2004" name="J. Biol. Chem.">
        <title>Stress-induced apoptosis associated with null mutation of ADAR1 RNA editing deaminase gene.</title>
        <authorList>
            <person name="Wang Q."/>
            <person name="Miyakoda M."/>
            <person name="Yang W."/>
            <person name="Khillan J."/>
            <person name="Stachura D.L."/>
            <person name="Weiss M.J."/>
            <person name="Nishikura K."/>
        </authorList>
    </citation>
    <scope>DISRUPTION PHENOTYPE</scope>
</reference>
<reference key="9">
    <citation type="journal article" date="2005" name="J. Biol. Chem.">
        <title>ADAR1 RNA deaminase limits short interfering RNA efficacy in mammalian cells.</title>
        <authorList>
            <person name="Yang W."/>
            <person name="Wang Q."/>
            <person name="Howell K.L."/>
            <person name="Lee J.T."/>
            <person name="Cho D.-S.C."/>
            <person name="Murray J.M."/>
            <person name="Nishikura K."/>
        </authorList>
    </citation>
    <scope>FUNCTION</scope>
</reference>
<reference key="10">
    <citation type="journal article" date="2005" name="Mol. Cell. Biol.">
        <title>ADAR1 interacts with NF90 through double-stranded RNA and regulates NF90-mediated gene expression independently of RNA editing.</title>
        <authorList>
            <person name="Nie Y."/>
            <person name="Ding L."/>
            <person name="Kao P.N."/>
            <person name="Braun R."/>
            <person name="Yang J.-H."/>
        </authorList>
    </citation>
    <scope>INTERACTION WITH ILF2 AND ILF3</scope>
</reference>
<reference key="11">
    <citation type="journal article" date="2007" name="J. Virol.">
        <title>Double-stranded RNA deaminase ADAR1 increases host susceptibility to virus infection.</title>
        <authorList>
            <person name="Nie Y."/>
            <person name="Hammond G.L."/>
            <person name="Yang J.H."/>
        </authorList>
    </citation>
    <scope>FUNCTION</scope>
    <scope>INTERACTION WITH EIF2AK2</scope>
</reference>
<reference key="12">
    <citation type="journal article" date="2007" name="RNA">
        <title>Editing modifies the GABA(A) receptor subunit alpha3.</title>
        <authorList>
            <person name="Ohlson J."/>
            <person name="Pedersen J.S."/>
            <person name="Haussler D."/>
            <person name="Ohman M."/>
        </authorList>
    </citation>
    <scope>FUNCTION</scope>
</reference>
<reference key="13">
    <citation type="journal article" date="2010" name="Cell">
        <title>A tissue-specific atlas of mouse protein phosphorylation and expression.</title>
        <authorList>
            <person name="Huttlin E.L."/>
            <person name="Jedrychowski M.P."/>
            <person name="Elias J.E."/>
            <person name="Goswami T."/>
            <person name="Rad R."/>
            <person name="Beausoleil S.A."/>
            <person name="Villen J."/>
            <person name="Haas W."/>
            <person name="Sowa M.E."/>
            <person name="Gygi S.P."/>
        </authorList>
    </citation>
    <scope>PHOSPHORYLATION [LARGE SCALE ANALYSIS] AT SER-582</scope>
    <scope>IDENTIFICATION BY MASS SPECTROMETRY [LARGE SCALE ANALYSIS]</scope>
    <source>
        <tissue>Brain</tissue>
        <tissue>Spleen</tissue>
    </source>
</reference>
<reference key="14">
    <citation type="journal article" date="2011" name="J. Interferon Cytokine Res.">
        <title>Adenosine deaminases acting on RNA, RNA editing, and interferon action.</title>
        <authorList>
            <person name="George C.X."/>
            <person name="Gan Z."/>
            <person name="Liu Y."/>
            <person name="Samuel C.E."/>
        </authorList>
    </citation>
    <scope>REVIEW</scope>
</reference>
<reference key="15">
    <citation type="journal article" date="2014" name="Mol. Cell. Proteomics">
        <title>Immunoaffinity enrichment and mass spectrometry analysis of protein methylation.</title>
        <authorList>
            <person name="Guo A."/>
            <person name="Gu H."/>
            <person name="Zhou J."/>
            <person name="Mulhern D."/>
            <person name="Wang Y."/>
            <person name="Lee K.A."/>
            <person name="Yang V."/>
            <person name="Aguiar M."/>
            <person name="Kornhauser J."/>
            <person name="Jia X."/>
            <person name="Ren J."/>
            <person name="Beausoleil S.A."/>
            <person name="Silva J.C."/>
            <person name="Vemulapalli V."/>
            <person name="Bedford M.T."/>
            <person name="Comb M.J."/>
        </authorList>
    </citation>
    <scope>METHYLATION [LARGE SCALE ANALYSIS] AT ARG-30 AND ARG-42</scope>
    <scope>IDENTIFICATION BY MASS SPECTROMETRY [LARGE SCALE ANALYSIS]</scope>
    <source>
        <tissue>Brain</tissue>
        <tissue>Embryo</tissue>
    </source>
</reference>